<accession>B2JIU6</accession>
<comment type="function">
    <text evidence="1">RNA chaperone that binds small regulatory RNA (sRNAs) and mRNAs to facilitate mRNA translational regulation in response to envelope stress, environmental stress and changes in metabolite concentrations. Also binds with high specificity to tRNAs.</text>
</comment>
<comment type="subunit">
    <text evidence="1">Homohexamer.</text>
</comment>
<comment type="similarity">
    <text evidence="1">Belongs to the Hfq family.</text>
</comment>
<dbReference type="EMBL" id="CP001043">
    <property type="protein sequence ID" value="ACC70597.1"/>
    <property type="molecule type" value="Genomic_DNA"/>
</dbReference>
<dbReference type="RefSeq" id="WP_007580427.1">
    <property type="nucleotide sequence ID" value="NZ_CADFGH010000003.1"/>
</dbReference>
<dbReference type="SMR" id="B2JIU6"/>
<dbReference type="STRING" id="391038.Bphy_1415"/>
<dbReference type="GeneID" id="69969655"/>
<dbReference type="KEGG" id="bph:Bphy_1415"/>
<dbReference type="eggNOG" id="COG1923">
    <property type="taxonomic scope" value="Bacteria"/>
</dbReference>
<dbReference type="HOGENOM" id="CLU_113688_2_2_4"/>
<dbReference type="OrthoDB" id="9799751at2"/>
<dbReference type="Proteomes" id="UP000001192">
    <property type="component" value="Chromosome 1"/>
</dbReference>
<dbReference type="GO" id="GO:0005829">
    <property type="term" value="C:cytosol"/>
    <property type="evidence" value="ECO:0007669"/>
    <property type="project" value="TreeGrafter"/>
</dbReference>
<dbReference type="GO" id="GO:0003723">
    <property type="term" value="F:RNA binding"/>
    <property type="evidence" value="ECO:0007669"/>
    <property type="project" value="UniProtKB-UniRule"/>
</dbReference>
<dbReference type="GO" id="GO:0006355">
    <property type="term" value="P:regulation of DNA-templated transcription"/>
    <property type="evidence" value="ECO:0007669"/>
    <property type="project" value="InterPro"/>
</dbReference>
<dbReference type="GO" id="GO:0043487">
    <property type="term" value="P:regulation of RNA stability"/>
    <property type="evidence" value="ECO:0007669"/>
    <property type="project" value="TreeGrafter"/>
</dbReference>
<dbReference type="GO" id="GO:0045974">
    <property type="term" value="P:regulation of translation, ncRNA-mediated"/>
    <property type="evidence" value="ECO:0007669"/>
    <property type="project" value="TreeGrafter"/>
</dbReference>
<dbReference type="CDD" id="cd01716">
    <property type="entry name" value="Hfq"/>
    <property type="match status" value="1"/>
</dbReference>
<dbReference type="FunFam" id="2.30.30.100:FF:000001">
    <property type="entry name" value="RNA-binding protein Hfq"/>
    <property type="match status" value="1"/>
</dbReference>
<dbReference type="Gene3D" id="2.30.30.100">
    <property type="match status" value="1"/>
</dbReference>
<dbReference type="HAMAP" id="MF_00436">
    <property type="entry name" value="Hfq"/>
    <property type="match status" value="1"/>
</dbReference>
<dbReference type="InterPro" id="IPR005001">
    <property type="entry name" value="Hfq"/>
</dbReference>
<dbReference type="InterPro" id="IPR010920">
    <property type="entry name" value="LSM_dom_sf"/>
</dbReference>
<dbReference type="InterPro" id="IPR047575">
    <property type="entry name" value="Sm"/>
</dbReference>
<dbReference type="NCBIfam" id="TIGR02383">
    <property type="entry name" value="Hfq"/>
    <property type="match status" value="1"/>
</dbReference>
<dbReference type="NCBIfam" id="NF001602">
    <property type="entry name" value="PRK00395.1"/>
    <property type="match status" value="1"/>
</dbReference>
<dbReference type="PANTHER" id="PTHR34772">
    <property type="entry name" value="RNA-BINDING PROTEIN HFQ"/>
    <property type="match status" value="1"/>
</dbReference>
<dbReference type="PANTHER" id="PTHR34772:SF1">
    <property type="entry name" value="RNA-BINDING PROTEIN HFQ"/>
    <property type="match status" value="1"/>
</dbReference>
<dbReference type="Pfam" id="PF17209">
    <property type="entry name" value="Hfq"/>
    <property type="match status" value="1"/>
</dbReference>
<dbReference type="SUPFAM" id="SSF50182">
    <property type="entry name" value="Sm-like ribonucleoproteins"/>
    <property type="match status" value="1"/>
</dbReference>
<dbReference type="PROSITE" id="PS52002">
    <property type="entry name" value="SM"/>
    <property type="match status" value="1"/>
</dbReference>
<evidence type="ECO:0000255" key="1">
    <source>
        <dbReference type="HAMAP-Rule" id="MF_00436"/>
    </source>
</evidence>
<evidence type="ECO:0000255" key="2">
    <source>
        <dbReference type="PROSITE-ProRule" id="PRU01346"/>
    </source>
</evidence>
<organism>
    <name type="scientific">Paraburkholderia phymatum (strain DSM 17167 / CIP 108236 / LMG 21445 / STM815)</name>
    <name type="common">Burkholderia phymatum</name>
    <dbReference type="NCBI Taxonomy" id="391038"/>
    <lineage>
        <taxon>Bacteria</taxon>
        <taxon>Pseudomonadati</taxon>
        <taxon>Pseudomonadota</taxon>
        <taxon>Betaproteobacteria</taxon>
        <taxon>Burkholderiales</taxon>
        <taxon>Burkholderiaceae</taxon>
        <taxon>Paraburkholderia</taxon>
    </lineage>
</organism>
<feature type="chain" id="PRO_1000190314" description="RNA-binding protein Hfq">
    <location>
        <begin position="1"/>
        <end position="78"/>
    </location>
</feature>
<feature type="domain" description="Sm" evidence="2">
    <location>
        <begin position="10"/>
        <end position="69"/>
    </location>
</feature>
<keyword id="KW-1185">Reference proteome</keyword>
<keyword id="KW-0694">RNA-binding</keyword>
<keyword id="KW-0346">Stress response</keyword>
<gene>
    <name evidence="1" type="primary">hfq</name>
    <name type="ordered locus">Bphy_1415</name>
</gene>
<proteinExistence type="inferred from homology"/>
<name>HFQ_PARP8</name>
<protein>
    <recommendedName>
        <fullName evidence="1">RNA-binding protein Hfq</fullName>
    </recommendedName>
</protein>
<reference key="1">
    <citation type="journal article" date="2014" name="Stand. Genomic Sci.">
        <title>Complete genome sequence of Burkholderia phymatum STM815(T), a broad host range and efficient nitrogen-fixing symbiont of Mimosa species.</title>
        <authorList>
            <person name="Moulin L."/>
            <person name="Klonowska A."/>
            <person name="Caroline B."/>
            <person name="Booth K."/>
            <person name="Vriezen J.A."/>
            <person name="Melkonian R."/>
            <person name="James E.K."/>
            <person name="Young J.P."/>
            <person name="Bena G."/>
            <person name="Hauser L."/>
            <person name="Land M."/>
            <person name="Kyrpides N."/>
            <person name="Bruce D."/>
            <person name="Chain P."/>
            <person name="Copeland A."/>
            <person name="Pitluck S."/>
            <person name="Woyke T."/>
            <person name="Lizotte-Waniewski M."/>
            <person name="Bristow J."/>
            <person name="Riley M."/>
        </authorList>
    </citation>
    <scope>NUCLEOTIDE SEQUENCE [LARGE SCALE GENOMIC DNA]</scope>
    <source>
        <strain>DSM 17167 / CIP 108236 / LMG 21445 / STM815</strain>
    </source>
</reference>
<sequence length="78" mass="8794">MSNKGQLLQDPFLNALRKEHVPVSIYLVNGIKLQGNIESFDQYVVLLRNTVTQMVYKHAISTVVPARPVNFHPDSESS</sequence>